<name>GAGT3_ARATH</name>
<organism>
    <name type="scientific">Arabidopsis thaliana</name>
    <name type="common">Mouse-ear cress</name>
    <dbReference type="NCBI Taxonomy" id="3702"/>
    <lineage>
        <taxon>Eukaryota</taxon>
        <taxon>Viridiplantae</taxon>
        <taxon>Streptophyta</taxon>
        <taxon>Embryophyta</taxon>
        <taxon>Tracheophyta</taxon>
        <taxon>Spermatophyta</taxon>
        <taxon>Magnoliopsida</taxon>
        <taxon>eudicotyledons</taxon>
        <taxon>Gunneridae</taxon>
        <taxon>Pentapetalae</taxon>
        <taxon>rosids</taxon>
        <taxon>malvids</taxon>
        <taxon>Brassicales</taxon>
        <taxon>Brassicaceae</taxon>
        <taxon>Camelineae</taxon>
        <taxon>Arabidopsis</taxon>
    </lineage>
</organism>
<protein>
    <recommendedName>
        <fullName>Glutathione hydrolase 3</fullName>
        <ecNumber>3.4.19.13</ecNumber>
    </recommendedName>
    <alternativeName>
        <fullName>Gamma-glutamyltransferase 3</fullName>
    </alternativeName>
    <alternativeName>
        <fullName>Gamma-glutamyltranspeptidase 3</fullName>
        <ecNumber>2.3.2.2</ecNumber>
    </alternativeName>
    <alternativeName>
        <fullName>Gamma-glutamyltranspeptidase 4</fullName>
    </alternativeName>
</protein>
<reference key="1">
    <citation type="journal article" date="1999" name="Nature">
        <title>Sequence and analysis of chromosome 4 of the plant Arabidopsis thaliana.</title>
        <authorList>
            <person name="Mayer K.F.X."/>
            <person name="Schueller C."/>
            <person name="Wambutt R."/>
            <person name="Murphy G."/>
            <person name="Volckaert G."/>
            <person name="Pohl T."/>
            <person name="Duesterhoeft A."/>
            <person name="Stiekema W."/>
            <person name="Entian K.-D."/>
            <person name="Terryn N."/>
            <person name="Harris B."/>
            <person name="Ansorge W."/>
            <person name="Brandt P."/>
            <person name="Grivell L.A."/>
            <person name="Rieger M."/>
            <person name="Weichselgartner M."/>
            <person name="de Simone V."/>
            <person name="Obermaier B."/>
            <person name="Mache R."/>
            <person name="Mueller M."/>
            <person name="Kreis M."/>
            <person name="Delseny M."/>
            <person name="Puigdomenech P."/>
            <person name="Watson M."/>
            <person name="Schmidtheini T."/>
            <person name="Reichert B."/>
            <person name="Portetelle D."/>
            <person name="Perez-Alonso M."/>
            <person name="Boutry M."/>
            <person name="Bancroft I."/>
            <person name="Vos P."/>
            <person name="Hoheisel J."/>
            <person name="Zimmermann W."/>
            <person name="Wedler H."/>
            <person name="Ridley P."/>
            <person name="Langham S.-A."/>
            <person name="McCullagh B."/>
            <person name="Bilham L."/>
            <person name="Robben J."/>
            <person name="van der Schueren J."/>
            <person name="Grymonprez B."/>
            <person name="Chuang Y.-J."/>
            <person name="Vandenbussche F."/>
            <person name="Braeken M."/>
            <person name="Weltjens I."/>
            <person name="Voet M."/>
            <person name="Bastiaens I."/>
            <person name="Aert R."/>
            <person name="Defoor E."/>
            <person name="Weitzenegger T."/>
            <person name="Bothe G."/>
            <person name="Ramsperger U."/>
            <person name="Hilbert H."/>
            <person name="Braun M."/>
            <person name="Holzer E."/>
            <person name="Brandt A."/>
            <person name="Peters S."/>
            <person name="van Staveren M."/>
            <person name="Dirkse W."/>
            <person name="Mooijman P."/>
            <person name="Klein Lankhorst R."/>
            <person name="Rose M."/>
            <person name="Hauf J."/>
            <person name="Koetter P."/>
            <person name="Berneiser S."/>
            <person name="Hempel S."/>
            <person name="Feldpausch M."/>
            <person name="Lamberth S."/>
            <person name="Van den Daele H."/>
            <person name="De Keyser A."/>
            <person name="Buysshaert C."/>
            <person name="Gielen J."/>
            <person name="Villarroel R."/>
            <person name="De Clercq R."/>
            <person name="van Montagu M."/>
            <person name="Rogers J."/>
            <person name="Cronin A."/>
            <person name="Quail M.A."/>
            <person name="Bray-Allen S."/>
            <person name="Clark L."/>
            <person name="Doggett J."/>
            <person name="Hall S."/>
            <person name="Kay M."/>
            <person name="Lennard N."/>
            <person name="McLay K."/>
            <person name="Mayes R."/>
            <person name="Pettett A."/>
            <person name="Rajandream M.A."/>
            <person name="Lyne M."/>
            <person name="Benes V."/>
            <person name="Rechmann S."/>
            <person name="Borkova D."/>
            <person name="Bloecker H."/>
            <person name="Scharfe M."/>
            <person name="Grimm M."/>
            <person name="Loehnert T.-H."/>
            <person name="Dose S."/>
            <person name="de Haan M."/>
            <person name="Maarse A.C."/>
            <person name="Schaefer M."/>
            <person name="Mueller-Auer S."/>
            <person name="Gabel C."/>
            <person name="Fuchs M."/>
            <person name="Fartmann B."/>
            <person name="Granderath K."/>
            <person name="Dauner D."/>
            <person name="Herzl A."/>
            <person name="Neumann S."/>
            <person name="Argiriou A."/>
            <person name="Vitale D."/>
            <person name="Liguori R."/>
            <person name="Piravandi E."/>
            <person name="Massenet O."/>
            <person name="Quigley F."/>
            <person name="Clabauld G."/>
            <person name="Muendlein A."/>
            <person name="Felber R."/>
            <person name="Schnabl S."/>
            <person name="Hiller R."/>
            <person name="Schmidt W."/>
            <person name="Lecharny A."/>
            <person name="Aubourg S."/>
            <person name="Chefdor F."/>
            <person name="Cooke R."/>
            <person name="Berger C."/>
            <person name="Monfort A."/>
            <person name="Casacuberta E."/>
            <person name="Gibbons T."/>
            <person name="Weber N."/>
            <person name="Vandenbol M."/>
            <person name="Bargues M."/>
            <person name="Terol J."/>
            <person name="Torres A."/>
            <person name="Perez-Perez A."/>
            <person name="Purnelle B."/>
            <person name="Bent E."/>
            <person name="Johnson S."/>
            <person name="Tacon D."/>
            <person name="Jesse T."/>
            <person name="Heijnen L."/>
            <person name="Schwarz S."/>
            <person name="Scholler P."/>
            <person name="Heber S."/>
            <person name="Francs P."/>
            <person name="Bielke C."/>
            <person name="Frishman D."/>
            <person name="Haase D."/>
            <person name="Lemcke K."/>
            <person name="Mewes H.-W."/>
            <person name="Stocker S."/>
            <person name="Zaccaria P."/>
            <person name="Bevan M."/>
            <person name="Wilson R.K."/>
            <person name="de la Bastide M."/>
            <person name="Habermann K."/>
            <person name="Parnell L."/>
            <person name="Dedhia N."/>
            <person name="Gnoj L."/>
            <person name="Schutz K."/>
            <person name="Huang E."/>
            <person name="Spiegel L."/>
            <person name="Sekhon M."/>
            <person name="Murray J."/>
            <person name="Sheet P."/>
            <person name="Cordes M."/>
            <person name="Abu-Threideh J."/>
            <person name="Stoneking T."/>
            <person name="Kalicki J."/>
            <person name="Graves T."/>
            <person name="Harmon G."/>
            <person name="Edwards J."/>
            <person name="Latreille P."/>
            <person name="Courtney L."/>
            <person name="Cloud J."/>
            <person name="Abbott A."/>
            <person name="Scott K."/>
            <person name="Johnson D."/>
            <person name="Minx P."/>
            <person name="Bentley D."/>
            <person name="Fulton B."/>
            <person name="Miller N."/>
            <person name="Greco T."/>
            <person name="Kemp K."/>
            <person name="Kramer J."/>
            <person name="Fulton L."/>
            <person name="Mardis E."/>
            <person name="Dante M."/>
            <person name="Pepin K."/>
            <person name="Hillier L.W."/>
            <person name="Nelson J."/>
            <person name="Spieth J."/>
            <person name="Ryan E."/>
            <person name="Andrews S."/>
            <person name="Geisel C."/>
            <person name="Layman D."/>
            <person name="Du H."/>
            <person name="Ali J."/>
            <person name="Berghoff A."/>
            <person name="Jones K."/>
            <person name="Drone K."/>
            <person name="Cotton M."/>
            <person name="Joshu C."/>
            <person name="Antonoiu B."/>
            <person name="Zidanic M."/>
            <person name="Strong C."/>
            <person name="Sun H."/>
            <person name="Lamar B."/>
            <person name="Yordan C."/>
            <person name="Ma P."/>
            <person name="Zhong J."/>
            <person name="Preston R."/>
            <person name="Vil D."/>
            <person name="Shekher M."/>
            <person name="Matero A."/>
            <person name="Shah R."/>
            <person name="Swaby I.K."/>
            <person name="O'Shaughnessy A."/>
            <person name="Rodriguez M."/>
            <person name="Hoffman J."/>
            <person name="Till S."/>
            <person name="Granat S."/>
            <person name="Shohdy N."/>
            <person name="Hasegawa A."/>
            <person name="Hameed A."/>
            <person name="Lodhi M."/>
            <person name="Johnson A."/>
            <person name="Chen E."/>
            <person name="Marra M.A."/>
            <person name="Martienssen R."/>
            <person name="McCombie W.R."/>
        </authorList>
    </citation>
    <scope>NUCLEOTIDE SEQUENCE [LARGE SCALE GENOMIC DNA]</scope>
    <source>
        <strain>cv. Columbia</strain>
    </source>
</reference>
<reference key="2">
    <citation type="journal article" date="2017" name="Plant J.">
        <title>Araport11: a complete reannotation of the Arabidopsis thaliana reference genome.</title>
        <authorList>
            <person name="Cheng C.Y."/>
            <person name="Krishnakumar V."/>
            <person name="Chan A.P."/>
            <person name="Thibaud-Nissen F."/>
            <person name="Schobel S."/>
            <person name="Town C.D."/>
        </authorList>
    </citation>
    <scope>GENOME REANNOTATION</scope>
    <source>
        <strain>cv. Columbia</strain>
    </source>
</reference>
<reference key="3">
    <citation type="journal article" date="2003" name="Science">
        <title>Empirical analysis of transcriptional activity in the Arabidopsis genome.</title>
        <authorList>
            <person name="Yamada K."/>
            <person name="Lim J."/>
            <person name="Dale J.M."/>
            <person name="Chen H."/>
            <person name="Shinn P."/>
            <person name="Palm C.J."/>
            <person name="Southwick A.M."/>
            <person name="Wu H.C."/>
            <person name="Kim C.J."/>
            <person name="Nguyen M."/>
            <person name="Pham P.K."/>
            <person name="Cheuk R.F."/>
            <person name="Karlin-Newmann G."/>
            <person name="Liu S.X."/>
            <person name="Lam B."/>
            <person name="Sakano H."/>
            <person name="Wu T."/>
            <person name="Yu G."/>
            <person name="Miranda M."/>
            <person name="Quach H.L."/>
            <person name="Tripp M."/>
            <person name="Chang C.H."/>
            <person name="Lee J.M."/>
            <person name="Toriumi M.J."/>
            <person name="Chan M.M."/>
            <person name="Tang C.C."/>
            <person name="Onodera C.S."/>
            <person name="Deng J.M."/>
            <person name="Akiyama K."/>
            <person name="Ansari Y."/>
            <person name="Arakawa T."/>
            <person name="Banh J."/>
            <person name="Banno F."/>
            <person name="Bowser L."/>
            <person name="Brooks S.Y."/>
            <person name="Carninci P."/>
            <person name="Chao Q."/>
            <person name="Choy N."/>
            <person name="Enju A."/>
            <person name="Goldsmith A.D."/>
            <person name="Gurjal M."/>
            <person name="Hansen N.F."/>
            <person name="Hayashizaki Y."/>
            <person name="Johnson-Hopson C."/>
            <person name="Hsuan V.W."/>
            <person name="Iida K."/>
            <person name="Karnes M."/>
            <person name="Khan S."/>
            <person name="Koesema E."/>
            <person name="Ishida J."/>
            <person name="Jiang P.X."/>
            <person name="Jones T."/>
            <person name="Kawai J."/>
            <person name="Kamiya A."/>
            <person name="Meyers C."/>
            <person name="Nakajima M."/>
            <person name="Narusaka M."/>
            <person name="Seki M."/>
            <person name="Sakurai T."/>
            <person name="Satou M."/>
            <person name="Tamse R."/>
            <person name="Vaysberg M."/>
            <person name="Wallender E.K."/>
            <person name="Wong C."/>
            <person name="Yamamura Y."/>
            <person name="Yuan S."/>
            <person name="Shinozaki K."/>
            <person name="Davis R.W."/>
            <person name="Theologis A."/>
            <person name="Ecker J.R."/>
        </authorList>
    </citation>
    <scope>NUCLEOTIDE SEQUENCE [LARGE SCALE MRNA] (ISOFORM 1)</scope>
    <source>
        <strain>cv. Columbia</strain>
    </source>
</reference>
<reference key="4">
    <citation type="journal article" date="2004" name="Genome Res.">
        <title>Whole genome sequence comparisons and 'full-length' cDNA sequences: a combined approach to evaluate and improve Arabidopsis genome annotation.</title>
        <authorList>
            <person name="Castelli V."/>
            <person name="Aury J.-M."/>
            <person name="Jaillon O."/>
            <person name="Wincker P."/>
            <person name="Clepet C."/>
            <person name="Menard M."/>
            <person name="Cruaud C."/>
            <person name="Quetier F."/>
            <person name="Scarpelli C."/>
            <person name="Schaechter V."/>
            <person name="Temple G."/>
            <person name="Caboche M."/>
            <person name="Weissenbach J."/>
            <person name="Salanoubat M."/>
        </authorList>
    </citation>
    <scope>NUCLEOTIDE SEQUENCE [LARGE SCALE MRNA] (ISOFORM 2)</scope>
    <source>
        <strain>cv. Columbia</strain>
    </source>
</reference>
<reference key="5">
    <citation type="submission" date="2006-07" db="EMBL/GenBank/DDBJ databases">
        <title>Large-scale analysis of RIKEN Arabidopsis full-length (RAFL) cDNAs.</title>
        <authorList>
            <person name="Totoki Y."/>
            <person name="Seki M."/>
            <person name="Ishida J."/>
            <person name="Nakajima M."/>
            <person name="Enju A."/>
            <person name="Kamiya A."/>
            <person name="Narusaka M."/>
            <person name="Shin-i T."/>
            <person name="Nakagawa M."/>
            <person name="Sakamoto N."/>
            <person name="Oishi K."/>
            <person name="Kohara Y."/>
            <person name="Kobayashi M."/>
            <person name="Toyoda A."/>
            <person name="Sakaki Y."/>
            <person name="Sakurai T."/>
            <person name="Iida K."/>
            <person name="Akiyama K."/>
            <person name="Satou M."/>
            <person name="Toyoda T."/>
            <person name="Konagaya A."/>
            <person name="Carninci P."/>
            <person name="Kawai J."/>
            <person name="Hayashizaki Y."/>
            <person name="Shinozaki K."/>
        </authorList>
    </citation>
    <scope>NUCLEOTIDE SEQUENCE [LARGE SCALE MRNA] (ISOFORM 1)</scope>
    <source>
        <strain>cv. Columbia</strain>
    </source>
</reference>
<reference key="6">
    <citation type="journal article" date="2007" name="Plant J.">
        <title>Glutathione conjugates in the vacuole are degraded by gamma-glutamyl transpeptidase GGT3 in Arabidopsis.</title>
        <authorList>
            <person name="Ohkama-Ohtsu N."/>
            <person name="Zhao P."/>
            <person name="Xiang C."/>
            <person name="Oliver D.J."/>
        </authorList>
    </citation>
    <scope>FUNCTION</scope>
    <scope>SUBCELLULAR LOCATION</scope>
    <scope>TISSUE SPECIFICITY</scope>
    <scope>INDUCTION BY AUXIN</scope>
</reference>
<reference key="7">
    <citation type="journal article" date="2007" name="Plant Physiol.">
        <title>Localization of members of the gamma-glutamyl transpeptidase family identifies sites of glutathione and glutathione S-conjugate hydrolysis.</title>
        <authorList>
            <person name="Martin M.N."/>
            <person name="Saladores P.H."/>
            <person name="Lambert E."/>
            <person name="Hudson A.O."/>
            <person name="Leustek T."/>
        </authorList>
    </citation>
    <scope>TISSUE SPECIFICITY</scope>
    <scope>DISRUPTION PHENOTYPE</scope>
</reference>
<reference key="8">
    <citation type="journal article" date="2011" name="J. Exp. Bot.">
        <title>Compensatory expression and substrate inducibility of gamma-glutamyl transferase GGT2 isoform in Arabidopsis thaliana.</title>
        <authorList>
            <person name="Destro T."/>
            <person name="Prasad D."/>
            <person name="Martignago D."/>
            <person name="Bernet I.L."/>
            <person name="Trentin A.R."/>
            <person name="Renu I.K."/>
            <person name="Ferretti M."/>
            <person name="Masi A."/>
        </authorList>
    </citation>
    <scope>TISSUE SPECIFICITY</scope>
</reference>
<accession>Q9M0G0</accession>
<accession>F4JMW7</accession>
<dbReference type="EC" id="3.4.19.13"/>
<dbReference type="EC" id="2.3.2.2"/>
<dbReference type="EMBL" id="AL161574">
    <property type="protein sequence ID" value="CAB79679.1"/>
    <property type="molecule type" value="Genomic_DNA"/>
</dbReference>
<dbReference type="EMBL" id="CP002687">
    <property type="protein sequence ID" value="AEE85602.1"/>
    <property type="molecule type" value="Genomic_DNA"/>
</dbReference>
<dbReference type="EMBL" id="CP002687">
    <property type="protein sequence ID" value="AEE85603.1"/>
    <property type="molecule type" value="Genomic_DNA"/>
</dbReference>
<dbReference type="EMBL" id="BT005754">
    <property type="protein sequence ID" value="AAO64159.1"/>
    <property type="molecule type" value="mRNA"/>
</dbReference>
<dbReference type="EMBL" id="BX828052">
    <property type="status" value="NOT_ANNOTATED_CDS"/>
    <property type="molecule type" value="mRNA"/>
</dbReference>
<dbReference type="EMBL" id="AK228574">
    <property type="protein sequence ID" value="BAF00492.1"/>
    <property type="molecule type" value="mRNA"/>
</dbReference>
<dbReference type="PIR" id="T13432">
    <property type="entry name" value="T13432"/>
</dbReference>
<dbReference type="RefSeq" id="NP_194650.1">
    <molecule id="Q9M0G0-1"/>
    <property type="nucleotide sequence ID" value="NM_119065.3"/>
</dbReference>
<dbReference type="RefSeq" id="NP_974636.1">
    <molecule id="Q9M0G0-2"/>
    <property type="nucleotide sequence ID" value="NM_202907.2"/>
</dbReference>
<dbReference type="SMR" id="Q9M0G0"/>
<dbReference type="FunCoup" id="Q9M0G0">
    <property type="interactions" value="1287"/>
</dbReference>
<dbReference type="STRING" id="3702.Q9M0G0"/>
<dbReference type="MEROPS" id="T03.A01"/>
<dbReference type="GlyCosmos" id="Q9M0G0">
    <property type="glycosylation" value="5 sites, No reported glycans"/>
</dbReference>
<dbReference type="GlyGen" id="Q9M0G0">
    <property type="glycosylation" value="5 sites"/>
</dbReference>
<dbReference type="PaxDb" id="3702-AT4G29210.1"/>
<dbReference type="ProteomicsDB" id="248569">
    <molecule id="Q9M0G0-1"/>
</dbReference>
<dbReference type="EnsemblPlants" id="AT4G29210.1">
    <molecule id="Q9M0G0-1"/>
    <property type="protein sequence ID" value="AT4G29210.1"/>
    <property type="gene ID" value="AT4G29210"/>
</dbReference>
<dbReference type="EnsemblPlants" id="AT4G29210.2">
    <molecule id="Q9M0G0-2"/>
    <property type="protein sequence ID" value="AT4G29210.2"/>
    <property type="gene ID" value="AT4G29210"/>
</dbReference>
<dbReference type="GeneID" id="829042"/>
<dbReference type="Gramene" id="AT4G29210.1">
    <molecule id="Q9M0G0-1"/>
    <property type="protein sequence ID" value="AT4G29210.1"/>
    <property type="gene ID" value="AT4G29210"/>
</dbReference>
<dbReference type="Gramene" id="AT4G29210.2">
    <molecule id="Q9M0G0-2"/>
    <property type="protein sequence ID" value="AT4G29210.2"/>
    <property type="gene ID" value="AT4G29210"/>
</dbReference>
<dbReference type="KEGG" id="ath:AT4G29210"/>
<dbReference type="Araport" id="AT4G29210"/>
<dbReference type="TAIR" id="AT4G29210">
    <property type="gene designation" value="GGT4"/>
</dbReference>
<dbReference type="eggNOG" id="KOG2410">
    <property type="taxonomic scope" value="Eukaryota"/>
</dbReference>
<dbReference type="InParanoid" id="Q9M0G0"/>
<dbReference type="OMA" id="ICGMGPP"/>
<dbReference type="PhylomeDB" id="Q9M0G0"/>
<dbReference type="BioCyc" id="ARA:AT4G29210-MONOMER"/>
<dbReference type="BioCyc" id="MetaCyc:AT4G29210-MONOMER"/>
<dbReference type="BRENDA" id="2.3.2.2">
    <property type="organism ID" value="399"/>
</dbReference>
<dbReference type="BRENDA" id="3.4.19.13">
    <property type="organism ID" value="399"/>
</dbReference>
<dbReference type="UniPathway" id="UPA00204"/>
<dbReference type="PRO" id="PR:Q9M0G0"/>
<dbReference type="Proteomes" id="UP000006548">
    <property type="component" value="Chromosome 4"/>
</dbReference>
<dbReference type="ExpressionAtlas" id="Q9M0G0">
    <property type="expression patterns" value="baseline and differential"/>
</dbReference>
<dbReference type="GO" id="GO:0005774">
    <property type="term" value="C:vacuolar membrane"/>
    <property type="evidence" value="ECO:0007669"/>
    <property type="project" value="UniProtKB-SubCell"/>
</dbReference>
<dbReference type="GO" id="GO:0005773">
    <property type="term" value="C:vacuole"/>
    <property type="evidence" value="ECO:0000314"/>
    <property type="project" value="TAIR"/>
</dbReference>
<dbReference type="GO" id="GO:0016756">
    <property type="term" value="F:glutathione gamma-glutamylcysteinyltransferase activity"/>
    <property type="evidence" value="ECO:0000314"/>
    <property type="project" value="TAIR"/>
</dbReference>
<dbReference type="GO" id="GO:0036374">
    <property type="term" value="F:glutathione hydrolase activity"/>
    <property type="evidence" value="ECO:0000315"/>
    <property type="project" value="TAIR"/>
</dbReference>
<dbReference type="GO" id="GO:0103068">
    <property type="term" value="F:leukotriene C4 gamma-glutamyl transferase activity"/>
    <property type="evidence" value="ECO:0007669"/>
    <property type="project" value="UniProtKB-EC"/>
</dbReference>
<dbReference type="GO" id="GO:0006751">
    <property type="term" value="P:glutathione catabolic process"/>
    <property type="evidence" value="ECO:0000314"/>
    <property type="project" value="TAIR"/>
</dbReference>
<dbReference type="GO" id="GO:0009636">
    <property type="term" value="P:response to toxic substance"/>
    <property type="evidence" value="ECO:0007669"/>
    <property type="project" value="UniProtKB-KW"/>
</dbReference>
<dbReference type="GO" id="GO:0006805">
    <property type="term" value="P:xenobiotic metabolic process"/>
    <property type="evidence" value="ECO:0000270"/>
    <property type="project" value="TAIR"/>
</dbReference>
<dbReference type="FunFam" id="1.10.246.130:FF:000001">
    <property type="entry name" value="Gamma-glutamyltransferase 5 isoform 1"/>
    <property type="match status" value="1"/>
</dbReference>
<dbReference type="FunFam" id="3.60.20.40:FF:000004">
    <property type="entry name" value="Glutathione hydrolase 1"/>
    <property type="match status" value="1"/>
</dbReference>
<dbReference type="Gene3D" id="1.10.246.130">
    <property type="match status" value="1"/>
</dbReference>
<dbReference type="Gene3D" id="3.60.20.40">
    <property type="match status" value="1"/>
</dbReference>
<dbReference type="InterPro" id="IPR043138">
    <property type="entry name" value="GGT_lsub_C"/>
</dbReference>
<dbReference type="InterPro" id="IPR000101">
    <property type="entry name" value="GGT_peptidase"/>
</dbReference>
<dbReference type="InterPro" id="IPR043137">
    <property type="entry name" value="GGT_ssub"/>
</dbReference>
<dbReference type="InterPro" id="IPR029055">
    <property type="entry name" value="Ntn_hydrolases_N"/>
</dbReference>
<dbReference type="NCBIfam" id="TIGR00066">
    <property type="entry name" value="g_glut_trans"/>
    <property type="match status" value="1"/>
</dbReference>
<dbReference type="PANTHER" id="PTHR11686">
    <property type="entry name" value="GAMMA GLUTAMYL TRANSPEPTIDASE"/>
    <property type="match status" value="1"/>
</dbReference>
<dbReference type="PANTHER" id="PTHR11686:SF9">
    <property type="entry name" value="RE13973P"/>
    <property type="match status" value="1"/>
</dbReference>
<dbReference type="Pfam" id="PF01019">
    <property type="entry name" value="G_glu_transpept"/>
    <property type="match status" value="1"/>
</dbReference>
<dbReference type="PRINTS" id="PR01210">
    <property type="entry name" value="GGTRANSPTASE"/>
</dbReference>
<dbReference type="SUPFAM" id="SSF56235">
    <property type="entry name" value="N-terminal nucleophile aminohydrolases (Ntn hydrolases)"/>
    <property type="match status" value="1"/>
</dbReference>
<comment type="function">
    <text evidence="3">May play a role in protecting plants from some xenobiotic chemicals by degrading vacuolar glutathione conjugates into cysteine conjugates.</text>
</comment>
<comment type="catalytic activity">
    <reaction>
        <text>an N-terminal (5-L-glutamyl)-[peptide] + an alpha-amino acid = 5-L-glutamyl amino acid + an N-terminal L-alpha-aminoacyl-[peptide]</text>
        <dbReference type="Rhea" id="RHEA:23904"/>
        <dbReference type="Rhea" id="RHEA-COMP:9780"/>
        <dbReference type="Rhea" id="RHEA-COMP:9795"/>
        <dbReference type="ChEBI" id="CHEBI:77644"/>
        <dbReference type="ChEBI" id="CHEBI:78597"/>
        <dbReference type="ChEBI" id="CHEBI:78599"/>
        <dbReference type="ChEBI" id="CHEBI:78608"/>
        <dbReference type="EC" id="2.3.2.2"/>
    </reaction>
</comment>
<comment type="catalytic activity">
    <reaction>
        <text>glutathione + H2O = L-cysteinylglycine + L-glutamate</text>
        <dbReference type="Rhea" id="RHEA:28807"/>
        <dbReference type="ChEBI" id="CHEBI:15377"/>
        <dbReference type="ChEBI" id="CHEBI:29985"/>
        <dbReference type="ChEBI" id="CHEBI:57925"/>
        <dbReference type="ChEBI" id="CHEBI:61694"/>
        <dbReference type="EC" id="3.4.19.13"/>
    </reaction>
</comment>
<comment type="catalytic activity">
    <reaction>
        <text>an S-substituted glutathione + H2O = an S-substituted L-cysteinylglycine + L-glutamate</text>
        <dbReference type="Rhea" id="RHEA:59468"/>
        <dbReference type="ChEBI" id="CHEBI:15377"/>
        <dbReference type="ChEBI" id="CHEBI:29985"/>
        <dbReference type="ChEBI" id="CHEBI:90779"/>
        <dbReference type="ChEBI" id="CHEBI:143103"/>
        <dbReference type="EC" id="3.4.19.13"/>
    </reaction>
</comment>
<comment type="pathway">
    <text>Sulfur metabolism; glutathione metabolism.</text>
</comment>
<comment type="subcellular location">
    <subcellularLocation>
        <location evidence="8">Vacuole membrane</location>
        <topology evidence="8">Single-pass membrane protein</topology>
    </subcellularLocation>
</comment>
<comment type="alternative products">
    <event type="alternative splicing"/>
    <isoform>
        <id>Q9M0G0-1</id>
        <name>1</name>
        <sequence type="displayed"/>
    </isoform>
    <isoform>
        <id>Q9M0G0-2</id>
        <name>2</name>
        <sequence type="described" ref="VSP_044955 VSP_044956"/>
    </isoform>
</comment>
<comment type="tissue specificity">
    <text evidence="3 4 5">Expressed in roots, cotyledons, leaves, flowers and siliques.</text>
</comment>
<comment type="induction">
    <text evidence="3">By auxin.</text>
</comment>
<comment type="disruption phenotype">
    <text evidence="4">No visible phenotype under normal growth conditions.</text>
</comment>
<comment type="similarity">
    <text evidence="7">Belongs to the gamma-glutamyltransferase family.</text>
</comment>
<gene>
    <name type="primary">GGT3</name>
    <name type="synonym">GGT4</name>
    <name type="ordered locus">At4g29210</name>
    <name type="ORF">F17A13.30</name>
</gene>
<evidence type="ECO:0000250" key="1"/>
<evidence type="ECO:0000255" key="2"/>
<evidence type="ECO:0000269" key="3">
    <source>
    </source>
</evidence>
<evidence type="ECO:0000269" key="4">
    <source>
    </source>
</evidence>
<evidence type="ECO:0000269" key="5">
    <source>
    </source>
</evidence>
<evidence type="ECO:0000303" key="6">
    <source>
    </source>
</evidence>
<evidence type="ECO:0000305" key="7"/>
<evidence type="ECO:0000305" key="8">
    <source>
    </source>
</evidence>
<proteinExistence type="evidence at transcript level"/>
<sequence length="637" mass="69148">MRDAIIADPLLAIDHETVAEKKKQSKNLKISLLLLLILLATSGYYSFSDNITTVFLSRQAIDDDHSLSLGTISDVVESENGVVAADDARCSEIGASVLRSGGHAVDAAVAITLCVGVVNPMSSGIGGGSFLIVSSQKDSKAEAFDMRETAPLAASKDMYKNDASAKSLGALSMGVPGEIAGLYEAWKRYGRLPWKPLFEPAIKLARDGFVVYPYLGKAISTKVAMILKDPGMRSVFSRNGQVLKTGETCYNPELAQSLETISEQGPGAFYNGTVGEKLVKDVKKAGGIITMDDLRSYKVRVTDAMSVDVMGYTVHGMPPPSGGTVGFSMVMNILDSYSNLYTASGRELGLHRLIEAMKHMFAARMDLGDPEFVNVTNSMNQMLSKAHAEEIQKRIFDNTTFPPEYYMNRWSQLRDQGTSHFCVVDADRNSVSMTSTVNYRFGAGVLSPSTGIVLNNEMDDFSTPTEITPDMLPPAPTNFIEPNKRPLSSMTPLVITKDGEFVAALGGAGGMHIIPAVLQVFLNCFVLNMKPKEAVESARIYHRLIPNVVSYENFTTINGDHIGVSEDTKMFLAERGHELKELSGGAIVQLIVQSFKEEKEEEMIIEIGRKIGKKSKPLKGLLTAVSDPRKDGKPAAV</sequence>
<feature type="chain" id="PRO_0000420913" description="Glutathione hydrolase 3">
    <location>
        <begin position="1"/>
        <end position="637"/>
    </location>
</feature>
<feature type="transmembrane region" description="Helical" evidence="2">
    <location>
        <begin position="28"/>
        <end position="48"/>
    </location>
</feature>
<feature type="active site" description="Nucleophile" evidence="1">
    <location>
        <position position="418"/>
    </location>
</feature>
<feature type="binding site" evidence="1">
    <location>
        <position position="147"/>
    </location>
    <ligand>
        <name>L-glutamate</name>
        <dbReference type="ChEBI" id="CHEBI:29985"/>
    </ligand>
</feature>
<feature type="binding site" evidence="1">
    <location>
        <position position="436"/>
    </location>
    <ligand>
        <name>L-glutamate</name>
        <dbReference type="ChEBI" id="CHEBI:29985"/>
    </ligand>
</feature>
<feature type="binding site" evidence="1">
    <location>
        <position position="438"/>
    </location>
    <ligand>
        <name>L-glutamate</name>
        <dbReference type="ChEBI" id="CHEBI:29985"/>
    </ligand>
</feature>
<feature type="binding site" evidence="1">
    <location>
        <position position="457"/>
    </location>
    <ligand>
        <name>L-glutamate</name>
        <dbReference type="ChEBI" id="CHEBI:29985"/>
    </ligand>
</feature>
<feature type="binding site" evidence="1">
    <location>
        <position position="460"/>
    </location>
    <ligand>
        <name>L-glutamate</name>
        <dbReference type="ChEBI" id="CHEBI:29985"/>
    </ligand>
</feature>
<feature type="binding site" evidence="1">
    <location>
        <begin position="488"/>
        <end position="489"/>
    </location>
    <ligand>
        <name>L-glutamate</name>
        <dbReference type="ChEBI" id="CHEBI:29985"/>
    </ligand>
</feature>
<feature type="binding site" evidence="1">
    <location>
        <begin position="509"/>
        <end position="510"/>
    </location>
    <ligand>
        <name>L-glutamate</name>
        <dbReference type="ChEBI" id="CHEBI:29985"/>
    </ligand>
</feature>
<feature type="glycosylation site" description="N-linked (GlcNAc...) asparagine" evidence="2">
    <location>
        <position position="50"/>
    </location>
</feature>
<feature type="glycosylation site" description="N-linked (GlcNAc...) asparagine" evidence="2">
    <location>
        <position position="271"/>
    </location>
</feature>
<feature type="glycosylation site" description="N-linked (GlcNAc...) asparagine" evidence="2">
    <location>
        <position position="374"/>
    </location>
</feature>
<feature type="glycosylation site" description="N-linked (GlcNAc...) asparagine" evidence="2">
    <location>
        <position position="398"/>
    </location>
</feature>
<feature type="glycosylation site" description="N-linked (GlcNAc...) asparagine" evidence="2">
    <location>
        <position position="553"/>
    </location>
</feature>
<feature type="splice variant" id="VSP_044955" description="In isoform 2." evidence="6">
    <original>DGEFVAALGGAGGMH</original>
    <variation>VHNQYISTFPVIYNS</variation>
    <location>
        <begin position="498"/>
        <end position="512"/>
    </location>
</feature>
<feature type="splice variant" id="VSP_044956" description="In isoform 2." evidence="6">
    <location>
        <begin position="513"/>
        <end position="637"/>
    </location>
</feature>
<keyword id="KW-0012">Acyltransferase</keyword>
<keyword id="KW-0025">Alternative splicing</keyword>
<keyword id="KW-0216">Detoxification</keyword>
<keyword id="KW-0325">Glycoprotein</keyword>
<keyword id="KW-0378">Hydrolase</keyword>
<keyword id="KW-0472">Membrane</keyword>
<keyword id="KW-1185">Reference proteome</keyword>
<keyword id="KW-0808">Transferase</keyword>
<keyword id="KW-0812">Transmembrane</keyword>
<keyword id="KW-1133">Transmembrane helix</keyword>
<keyword id="KW-0926">Vacuole</keyword>